<proteinExistence type="inferred from homology"/>
<organism>
    <name type="scientific">Rhizobium meliloti (strain 1021)</name>
    <name type="common">Ensifer meliloti</name>
    <name type="synonym">Sinorhizobium meliloti</name>
    <dbReference type="NCBI Taxonomy" id="266834"/>
    <lineage>
        <taxon>Bacteria</taxon>
        <taxon>Pseudomonadati</taxon>
        <taxon>Pseudomonadota</taxon>
        <taxon>Alphaproteobacteria</taxon>
        <taxon>Hyphomicrobiales</taxon>
        <taxon>Rhizobiaceae</taxon>
        <taxon>Sinorhizobium/Ensifer group</taxon>
        <taxon>Sinorhizobium</taxon>
    </lineage>
</organism>
<keyword id="KW-0067">ATP-binding</keyword>
<keyword id="KW-0460">Magnesium</keyword>
<keyword id="KW-0464">Manganese</keyword>
<keyword id="KW-0479">Metal-binding</keyword>
<keyword id="KW-0547">Nucleotide-binding</keyword>
<keyword id="KW-0548">Nucleotidyltransferase</keyword>
<keyword id="KW-1185">Reference proteome</keyword>
<keyword id="KW-0808">Transferase</keyword>
<reference key="1">
    <citation type="journal article" date="2001" name="Proc. Natl. Acad. Sci. U.S.A.">
        <title>Analysis of the chromosome sequence of the legume symbiont Sinorhizobium meliloti strain 1021.</title>
        <authorList>
            <person name="Capela D."/>
            <person name="Barloy-Hubler F."/>
            <person name="Gouzy J."/>
            <person name="Bothe G."/>
            <person name="Ampe F."/>
            <person name="Batut J."/>
            <person name="Boistard P."/>
            <person name="Becker A."/>
            <person name="Boutry M."/>
            <person name="Cadieu E."/>
            <person name="Dreano S."/>
            <person name="Gloux S."/>
            <person name="Godrie T."/>
            <person name="Goffeau A."/>
            <person name="Kahn D."/>
            <person name="Kiss E."/>
            <person name="Lelaure V."/>
            <person name="Masuy D."/>
            <person name="Pohl T."/>
            <person name="Portetelle D."/>
            <person name="Puehler A."/>
            <person name="Purnelle B."/>
            <person name="Ramsperger U."/>
            <person name="Renard C."/>
            <person name="Thebault P."/>
            <person name="Vandenbol M."/>
            <person name="Weidner S."/>
            <person name="Galibert F."/>
        </authorList>
    </citation>
    <scope>NUCLEOTIDE SEQUENCE [LARGE SCALE GENOMIC DNA]</scope>
    <source>
        <strain>1021</strain>
    </source>
</reference>
<reference key="2">
    <citation type="journal article" date="2001" name="Science">
        <title>The composite genome of the legume symbiont Sinorhizobium meliloti.</title>
        <authorList>
            <person name="Galibert F."/>
            <person name="Finan T.M."/>
            <person name="Long S.R."/>
            <person name="Puehler A."/>
            <person name="Abola P."/>
            <person name="Ampe F."/>
            <person name="Barloy-Hubler F."/>
            <person name="Barnett M.J."/>
            <person name="Becker A."/>
            <person name="Boistard P."/>
            <person name="Bothe G."/>
            <person name="Boutry M."/>
            <person name="Bowser L."/>
            <person name="Buhrmester J."/>
            <person name="Cadieu E."/>
            <person name="Capela D."/>
            <person name="Chain P."/>
            <person name="Cowie A."/>
            <person name="Davis R.W."/>
            <person name="Dreano S."/>
            <person name="Federspiel N.A."/>
            <person name="Fisher R.F."/>
            <person name="Gloux S."/>
            <person name="Godrie T."/>
            <person name="Goffeau A."/>
            <person name="Golding B."/>
            <person name="Gouzy J."/>
            <person name="Gurjal M."/>
            <person name="Hernandez-Lucas I."/>
            <person name="Hong A."/>
            <person name="Huizar L."/>
            <person name="Hyman R.W."/>
            <person name="Jones T."/>
            <person name="Kahn D."/>
            <person name="Kahn M.L."/>
            <person name="Kalman S."/>
            <person name="Keating D.H."/>
            <person name="Kiss E."/>
            <person name="Komp C."/>
            <person name="Lelaure V."/>
            <person name="Masuy D."/>
            <person name="Palm C."/>
            <person name="Peck M.C."/>
            <person name="Pohl T.M."/>
            <person name="Portetelle D."/>
            <person name="Purnelle B."/>
            <person name="Ramsperger U."/>
            <person name="Surzycki R."/>
            <person name="Thebault P."/>
            <person name="Vandenbol M."/>
            <person name="Vorhoelter F.J."/>
            <person name="Weidner S."/>
            <person name="Wells D.H."/>
            <person name="Wong K."/>
            <person name="Yeh K.-C."/>
            <person name="Batut J."/>
        </authorList>
    </citation>
    <scope>NUCLEOTIDE SEQUENCE [LARGE SCALE GENOMIC DNA]</scope>
    <source>
        <strain>1021</strain>
    </source>
</reference>
<comment type="function">
    <text evidence="1">Nucleotidyltransferase involved in the post-translational modification of proteins. It can catalyze the addition of adenosine monophosphate (AMP) or uridine monophosphate (UMP) to a protein, resulting in modifications known as AMPylation and UMPylation.</text>
</comment>
<comment type="catalytic activity">
    <reaction evidence="1">
        <text>L-seryl-[protein] + ATP = 3-O-(5'-adenylyl)-L-seryl-[protein] + diphosphate</text>
        <dbReference type="Rhea" id="RHEA:58120"/>
        <dbReference type="Rhea" id="RHEA-COMP:9863"/>
        <dbReference type="Rhea" id="RHEA-COMP:15073"/>
        <dbReference type="ChEBI" id="CHEBI:29999"/>
        <dbReference type="ChEBI" id="CHEBI:30616"/>
        <dbReference type="ChEBI" id="CHEBI:33019"/>
        <dbReference type="ChEBI" id="CHEBI:142516"/>
        <dbReference type="EC" id="2.7.7.108"/>
    </reaction>
</comment>
<comment type="catalytic activity">
    <reaction evidence="1">
        <text>L-threonyl-[protein] + ATP = 3-O-(5'-adenylyl)-L-threonyl-[protein] + diphosphate</text>
        <dbReference type="Rhea" id="RHEA:54292"/>
        <dbReference type="Rhea" id="RHEA-COMP:11060"/>
        <dbReference type="Rhea" id="RHEA-COMP:13847"/>
        <dbReference type="ChEBI" id="CHEBI:30013"/>
        <dbReference type="ChEBI" id="CHEBI:30616"/>
        <dbReference type="ChEBI" id="CHEBI:33019"/>
        <dbReference type="ChEBI" id="CHEBI:138113"/>
        <dbReference type="EC" id="2.7.7.108"/>
    </reaction>
</comment>
<comment type="catalytic activity">
    <reaction evidence="1">
        <text>L-tyrosyl-[protein] + ATP = O-(5'-adenylyl)-L-tyrosyl-[protein] + diphosphate</text>
        <dbReference type="Rhea" id="RHEA:54288"/>
        <dbReference type="Rhea" id="RHEA-COMP:10136"/>
        <dbReference type="Rhea" id="RHEA-COMP:13846"/>
        <dbReference type="ChEBI" id="CHEBI:30616"/>
        <dbReference type="ChEBI" id="CHEBI:33019"/>
        <dbReference type="ChEBI" id="CHEBI:46858"/>
        <dbReference type="ChEBI" id="CHEBI:83624"/>
        <dbReference type="EC" id="2.7.7.108"/>
    </reaction>
</comment>
<comment type="catalytic activity">
    <reaction evidence="1">
        <text>L-histidyl-[protein] + UTP = N(tele)-(5'-uridylyl)-L-histidyl-[protein] + diphosphate</text>
        <dbReference type="Rhea" id="RHEA:83891"/>
        <dbReference type="Rhea" id="RHEA-COMP:9745"/>
        <dbReference type="Rhea" id="RHEA-COMP:20239"/>
        <dbReference type="ChEBI" id="CHEBI:29979"/>
        <dbReference type="ChEBI" id="CHEBI:33019"/>
        <dbReference type="ChEBI" id="CHEBI:46398"/>
        <dbReference type="ChEBI" id="CHEBI:233474"/>
    </reaction>
</comment>
<comment type="catalytic activity">
    <reaction evidence="1">
        <text>L-seryl-[protein] + UTP = O-(5'-uridylyl)-L-seryl-[protein] + diphosphate</text>
        <dbReference type="Rhea" id="RHEA:64604"/>
        <dbReference type="Rhea" id="RHEA-COMP:9863"/>
        <dbReference type="Rhea" id="RHEA-COMP:16635"/>
        <dbReference type="ChEBI" id="CHEBI:29999"/>
        <dbReference type="ChEBI" id="CHEBI:33019"/>
        <dbReference type="ChEBI" id="CHEBI:46398"/>
        <dbReference type="ChEBI" id="CHEBI:156051"/>
    </reaction>
</comment>
<comment type="catalytic activity">
    <reaction evidence="1">
        <text>L-tyrosyl-[protein] + UTP = O-(5'-uridylyl)-L-tyrosyl-[protein] + diphosphate</text>
        <dbReference type="Rhea" id="RHEA:83887"/>
        <dbReference type="Rhea" id="RHEA-COMP:10136"/>
        <dbReference type="Rhea" id="RHEA-COMP:20238"/>
        <dbReference type="ChEBI" id="CHEBI:33019"/>
        <dbReference type="ChEBI" id="CHEBI:46398"/>
        <dbReference type="ChEBI" id="CHEBI:46858"/>
        <dbReference type="ChEBI" id="CHEBI:90602"/>
    </reaction>
</comment>
<comment type="cofactor">
    <cofactor evidence="1">
        <name>Mg(2+)</name>
        <dbReference type="ChEBI" id="CHEBI:18420"/>
    </cofactor>
    <cofactor evidence="1">
        <name>Mn(2+)</name>
        <dbReference type="ChEBI" id="CHEBI:29035"/>
    </cofactor>
</comment>
<comment type="similarity">
    <text evidence="1">Belongs to the SELO family.</text>
</comment>
<dbReference type="EC" id="2.7.7.-" evidence="1"/>
<dbReference type="EC" id="2.7.7.108" evidence="1"/>
<dbReference type="EMBL" id="AL591688">
    <property type="protein sequence ID" value="CAC45554.1"/>
    <property type="molecule type" value="Genomic_DNA"/>
</dbReference>
<dbReference type="RefSeq" id="NP_385088.1">
    <property type="nucleotide sequence ID" value="NC_003047.1"/>
</dbReference>
<dbReference type="RefSeq" id="WP_010968967.1">
    <property type="nucleotide sequence ID" value="NC_003047.1"/>
</dbReference>
<dbReference type="SMR" id="Q92RB2"/>
<dbReference type="EnsemblBacteria" id="CAC45554">
    <property type="protein sequence ID" value="CAC45554"/>
    <property type="gene ID" value="SMc00453"/>
</dbReference>
<dbReference type="KEGG" id="sme:SMc00453"/>
<dbReference type="PATRIC" id="fig|266834.11.peg.2383"/>
<dbReference type="eggNOG" id="COG0397">
    <property type="taxonomic scope" value="Bacteria"/>
</dbReference>
<dbReference type="HOGENOM" id="CLU_010245_4_1_5"/>
<dbReference type="OrthoDB" id="9776281at2"/>
<dbReference type="Proteomes" id="UP000001976">
    <property type="component" value="Chromosome"/>
</dbReference>
<dbReference type="GO" id="GO:0070733">
    <property type="term" value="F:AMPylase activity"/>
    <property type="evidence" value="ECO:0007669"/>
    <property type="project" value="RHEA"/>
</dbReference>
<dbReference type="GO" id="GO:0005524">
    <property type="term" value="F:ATP binding"/>
    <property type="evidence" value="ECO:0007669"/>
    <property type="project" value="UniProtKB-UniRule"/>
</dbReference>
<dbReference type="GO" id="GO:0000287">
    <property type="term" value="F:magnesium ion binding"/>
    <property type="evidence" value="ECO:0007669"/>
    <property type="project" value="UniProtKB-UniRule"/>
</dbReference>
<dbReference type="HAMAP" id="MF_00692">
    <property type="entry name" value="YdiU_SelO"/>
    <property type="match status" value="1"/>
</dbReference>
<dbReference type="InterPro" id="IPR003846">
    <property type="entry name" value="SelO"/>
</dbReference>
<dbReference type="NCBIfam" id="NF000658">
    <property type="entry name" value="PRK00029.1"/>
    <property type="match status" value="1"/>
</dbReference>
<dbReference type="PANTHER" id="PTHR32057">
    <property type="entry name" value="PROTEIN ADENYLYLTRANSFERASE SELO, MITOCHONDRIAL"/>
    <property type="match status" value="1"/>
</dbReference>
<dbReference type="PANTHER" id="PTHR32057:SF14">
    <property type="entry name" value="PROTEIN ADENYLYLTRANSFERASE SELO, MITOCHONDRIAL"/>
    <property type="match status" value="1"/>
</dbReference>
<dbReference type="Pfam" id="PF02696">
    <property type="entry name" value="SelO"/>
    <property type="match status" value="1"/>
</dbReference>
<protein>
    <recommendedName>
        <fullName evidence="1">Protein nucleotidyltransferase YdiU</fullName>
        <ecNumber evidence="1">2.7.7.-</ecNumber>
    </recommendedName>
    <alternativeName>
        <fullName evidence="1">Protein adenylyltransferase YdiU</fullName>
        <ecNumber evidence="1">2.7.7.108</ecNumber>
    </alternativeName>
    <alternativeName>
        <fullName evidence="1">Protein uridylyltransferase YdiU</fullName>
        <ecNumber evidence="1">2.7.7.-</ecNumber>
    </alternativeName>
</protein>
<accession>Q92RB2</accession>
<evidence type="ECO:0000255" key="1">
    <source>
        <dbReference type="HAMAP-Rule" id="MF_00692"/>
    </source>
</evidence>
<feature type="chain" id="PRO_0000121424" description="Protein nucleotidyltransferase YdiU">
    <location>
        <begin position="1"/>
        <end position="490"/>
    </location>
</feature>
<feature type="active site" description="Proton acceptor" evidence="1">
    <location>
        <position position="248"/>
    </location>
</feature>
<feature type="binding site" evidence="1">
    <location>
        <position position="86"/>
    </location>
    <ligand>
        <name>ATP</name>
        <dbReference type="ChEBI" id="CHEBI:30616"/>
    </ligand>
</feature>
<feature type="binding site" evidence="1">
    <location>
        <position position="88"/>
    </location>
    <ligand>
        <name>ATP</name>
        <dbReference type="ChEBI" id="CHEBI:30616"/>
    </ligand>
</feature>
<feature type="binding site" evidence="1">
    <location>
        <position position="89"/>
    </location>
    <ligand>
        <name>ATP</name>
        <dbReference type="ChEBI" id="CHEBI:30616"/>
    </ligand>
</feature>
<feature type="binding site" evidence="1">
    <location>
        <position position="109"/>
    </location>
    <ligand>
        <name>ATP</name>
        <dbReference type="ChEBI" id="CHEBI:30616"/>
    </ligand>
</feature>
<feature type="binding site" evidence="1">
    <location>
        <position position="121"/>
    </location>
    <ligand>
        <name>ATP</name>
        <dbReference type="ChEBI" id="CHEBI:30616"/>
    </ligand>
</feature>
<feature type="binding site" evidence="1">
    <location>
        <position position="122"/>
    </location>
    <ligand>
        <name>ATP</name>
        <dbReference type="ChEBI" id="CHEBI:30616"/>
    </ligand>
</feature>
<feature type="binding site" evidence="1">
    <location>
        <position position="172"/>
    </location>
    <ligand>
        <name>ATP</name>
        <dbReference type="ChEBI" id="CHEBI:30616"/>
    </ligand>
</feature>
<feature type="binding site" evidence="1">
    <location>
        <position position="179"/>
    </location>
    <ligand>
        <name>ATP</name>
        <dbReference type="ChEBI" id="CHEBI:30616"/>
    </ligand>
</feature>
<feature type="binding site" evidence="1">
    <location>
        <position position="249"/>
    </location>
    <ligand>
        <name>Mg(2+)</name>
        <dbReference type="ChEBI" id="CHEBI:18420"/>
    </ligand>
</feature>
<feature type="binding site" evidence="1">
    <location>
        <position position="258"/>
    </location>
    <ligand>
        <name>ATP</name>
        <dbReference type="ChEBI" id="CHEBI:30616"/>
    </ligand>
</feature>
<feature type="binding site" evidence="1">
    <location>
        <position position="258"/>
    </location>
    <ligand>
        <name>Mg(2+)</name>
        <dbReference type="ChEBI" id="CHEBI:18420"/>
    </ligand>
</feature>
<sequence>MTAFRFDNSYARLPANFYARVQPTPVAEPWLIKLNRPLAGELGLDAEALERDGAAIFSGNLVPEGAEPLAMAYAGHQFGTFVPQLGDGRAILLGEVTDAGGRRRDIQLKGAGQTPYSRRGDGRAALGPVLREYIVSEAMHALGVPTTRALAATATGQPVYREQILPGAVFTRVAASHIRVGTFQFFAARGDMESIRTLADYVIGRHYPELKTDEKPYLALLKAVAARQAALIARWLHVGFIHGVMNTDNMTISGETIDFGPCAFMDDYDPKTVFSSIDQFGRYAYANQPAIGQWNLARLAETLVTLFDPVADTAVNLANDALGEYGTIFQKHWLDGMRRKIGLLTDEDEDLDLVQSLLTLMQNGKADFTLTFRRLAASAENATADTELASLFEEPQALSPWLEHWRRRLEREPQPATERAAAMRSVNPAFIPRNHRVEQAIAAATEDADFSLFEALLDVTSRPYEDQPGHAAYAAPPEPGEEVLQTFCGT</sequence>
<gene>
    <name evidence="1" type="primary">ydiU</name>
    <name evidence="1" type="synonym">selO</name>
    <name type="ordered locus">R00982</name>
    <name type="ORF">SMc00453</name>
</gene>
<name>SELO_RHIME</name>